<sequence length="252" mass="28163">MKFGIISIFPEMFKAINDFGVTARAIKDSKVSISCFNPRDYTTDRHATVDDTSFGGGAGMVMKYQPLSAAIEDAKNTLGCGTKVVYLSPQGSIFNHRKAQELLQNDSLILLCGRYEGVDERLIQDYVDEEISVGDFVLSGGELPAMLVMDSLIRLLPEVLGNKESVVEDSFYDGLLDYPHYTKPAVLPNGNAVPDVLLSGNHKEIAKWRRKQKLIRTYERRKDLIECLCLSAKDKQILDDYKIDKVSTKGEE</sequence>
<accession>Q2A1N5</accession>
<protein>
    <recommendedName>
        <fullName evidence="1">tRNA (guanine-N(1)-)-methyltransferase</fullName>
        <ecNumber evidence="1">2.1.1.228</ecNumber>
    </recommendedName>
    <alternativeName>
        <fullName evidence="1">M1G-methyltransferase</fullName>
    </alternativeName>
    <alternativeName>
        <fullName evidence="1">tRNA [GM37] methyltransferase</fullName>
    </alternativeName>
</protein>
<evidence type="ECO:0000255" key="1">
    <source>
        <dbReference type="HAMAP-Rule" id="MF_00605"/>
    </source>
</evidence>
<organism>
    <name type="scientific">Francisella tularensis subsp. holarctica (strain LVS)</name>
    <dbReference type="NCBI Taxonomy" id="376619"/>
    <lineage>
        <taxon>Bacteria</taxon>
        <taxon>Pseudomonadati</taxon>
        <taxon>Pseudomonadota</taxon>
        <taxon>Gammaproteobacteria</taxon>
        <taxon>Thiotrichales</taxon>
        <taxon>Francisellaceae</taxon>
        <taxon>Francisella</taxon>
    </lineage>
</organism>
<proteinExistence type="inferred from homology"/>
<reference key="1">
    <citation type="submission" date="2006-03" db="EMBL/GenBank/DDBJ databases">
        <title>Complete genome sequence of Francisella tularensis LVS (Live Vaccine Strain).</title>
        <authorList>
            <person name="Chain P."/>
            <person name="Larimer F."/>
            <person name="Land M."/>
            <person name="Stilwagen S."/>
            <person name="Larsson P."/>
            <person name="Bearden S."/>
            <person name="Chu M."/>
            <person name="Oyston P."/>
            <person name="Forsman M."/>
            <person name="Andersson S."/>
            <person name="Lindler L."/>
            <person name="Titball R."/>
            <person name="Garcia E."/>
        </authorList>
    </citation>
    <scope>NUCLEOTIDE SEQUENCE [LARGE SCALE GENOMIC DNA]</scope>
    <source>
        <strain>LVS</strain>
    </source>
</reference>
<keyword id="KW-0963">Cytoplasm</keyword>
<keyword id="KW-0489">Methyltransferase</keyword>
<keyword id="KW-1185">Reference proteome</keyword>
<keyword id="KW-0949">S-adenosyl-L-methionine</keyword>
<keyword id="KW-0808">Transferase</keyword>
<keyword id="KW-0819">tRNA processing</keyword>
<feature type="chain" id="PRO_0000257420" description="tRNA (guanine-N(1)-)-methyltransferase">
    <location>
        <begin position="1"/>
        <end position="252"/>
    </location>
</feature>
<feature type="binding site" evidence="1">
    <location>
        <position position="113"/>
    </location>
    <ligand>
        <name>S-adenosyl-L-methionine</name>
        <dbReference type="ChEBI" id="CHEBI:59789"/>
    </ligand>
</feature>
<feature type="binding site" evidence="1">
    <location>
        <begin position="133"/>
        <end position="138"/>
    </location>
    <ligand>
        <name>S-adenosyl-L-methionine</name>
        <dbReference type="ChEBI" id="CHEBI:59789"/>
    </ligand>
</feature>
<gene>
    <name evidence="1" type="primary">trmD</name>
    <name type="ordered locus">FTL_1736</name>
</gene>
<dbReference type="EC" id="2.1.1.228" evidence="1"/>
<dbReference type="EMBL" id="AM233362">
    <property type="protein sequence ID" value="CAJ80175.1"/>
    <property type="molecule type" value="Genomic_DNA"/>
</dbReference>
<dbReference type="RefSeq" id="WP_003024826.1">
    <property type="nucleotide sequence ID" value="NZ_CP009694.1"/>
</dbReference>
<dbReference type="SMR" id="Q2A1N5"/>
<dbReference type="KEGG" id="ftl:FTL_1736"/>
<dbReference type="Proteomes" id="UP000001944">
    <property type="component" value="Chromosome"/>
</dbReference>
<dbReference type="GO" id="GO:0005829">
    <property type="term" value="C:cytosol"/>
    <property type="evidence" value="ECO:0007669"/>
    <property type="project" value="TreeGrafter"/>
</dbReference>
<dbReference type="GO" id="GO:0052906">
    <property type="term" value="F:tRNA (guanine(37)-N1)-methyltransferase activity"/>
    <property type="evidence" value="ECO:0007669"/>
    <property type="project" value="UniProtKB-UniRule"/>
</dbReference>
<dbReference type="GO" id="GO:0002939">
    <property type="term" value="P:tRNA N1-guanine methylation"/>
    <property type="evidence" value="ECO:0007669"/>
    <property type="project" value="TreeGrafter"/>
</dbReference>
<dbReference type="CDD" id="cd18080">
    <property type="entry name" value="TrmD-like"/>
    <property type="match status" value="1"/>
</dbReference>
<dbReference type="FunFam" id="1.10.1270.20:FF:000001">
    <property type="entry name" value="tRNA (guanine-N(1)-)-methyltransferase"/>
    <property type="match status" value="1"/>
</dbReference>
<dbReference type="FunFam" id="3.40.1280.10:FF:000001">
    <property type="entry name" value="tRNA (guanine-N(1)-)-methyltransferase"/>
    <property type="match status" value="1"/>
</dbReference>
<dbReference type="Gene3D" id="3.40.1280.10">
    <property type="match status" value="1"/>
</dbReference>
<dbReference type="Gene3D" id="1.10.1270.20">
    <property type="entry name" value="tRNA(m1g37)methyltransferase, domain 2"/>
    <property type="match status" value="1"/>
</dbReference>
<dbReference type="HAMAP" id="MF_00605">
    <property type="entry name" value="TrmD"/>
    <property type="match status" value="1"/>
</dbReference>
<dbReference type="InterPro" id="IPR029028">
    <property type="entry name" value="Alpha/beta_knot_MTases"/>
</dbReference>
<dbReference type="InterPro" id="IPR023148">
    <property type="entry name" value="tRNA_m1G_MeTrfase_C_sf"/>
</dbReference>
<dbReference type="InterPro" id="IPR002649">
    <property type="entry name" value="tRNA_m1G_MeTrfase_TrmD"/>
</dbReference>
<dbReference type="InterPro" id="IPR029026">
    <property type="entry name" value="tRNA_m1G_MTases_N"/>
</dbReference>
<dbReference type="InterPro" id="IPR016009">
    <property type="entry name" value="tRNA_MeTrfase_TRMD/TRM10"/>
</dbReference>
<dbReference type="NCBIfam" id="NF000648">
    <property type="entry name" value="PRK00026.1"/>
    <property type="match status" value="1"/>
</dbReference>
<dbReference type="NCBIfam" id="TIGR00088">
    <property type="entry name" value="trmD"/>
    <property type="match status" value="1"/>
</dbReference>
<dbReference type="PANTHER" id="PTHR46417">
    <property type="entry name" value="TRNA (GUANINE-N(1)-)-METHYLTRANSFERASE"/>
    <property type="match status" value="1"/>
</dbReference>
<dbReference type="PANTHER" id="PTHR46417:SF1">
    <property type="entry name" value="TRNA (GUANINE-N(1)-)-METHYLTRANSFERASE"/>
    <property type="match status" value="1"/>
</dbReference>
<dbReference type="Pfam" id="PF01746">
    <property type="entry name" value="tRNA_m1G_MT"/>
    <property type="match status" value="1"/>
</dbReference>
<dbReference type="PIRSF" id="PIRSF000386">
    <property type="entry name" value="tRNA_mtase"/>
    <property type="match status" value="1"/>
</dbReference>
<dbReference type="SUPFAM" id="SSF75217">
    <property type="entry name" value="alpha/beta knot"/>
    <property type="match status" value="1"/>
</dbReference>
<comment type="function">
    <text evidence="1">Specifically methylates guanosine-37 in various tRNAs.</text>
</comment>
<comment type="catalytic activity">
    <reaction evidence="1">
        <text>guanosine(37) in tRNA + S-adenosyl-L-methionine = N(1)-methylguanosine(37) in tRNA + S-adenosyl-L-homocysteine + H(+)</text>
        <dbReference type="Rhea" id="RHEA:36899"/>
        <dbReference type="Rhea" id="RHEA-COMP:10145"/>
        <dbReference type="Rhea" id="RHEA-COMP:10147"/>
        <dbReference type="ChEBI" id="CHEBI:15378"/>
        <dbReference type="ChEBI" id="CHEBI:57856"/>
        <dbReference type="ChEBI" id="CHEBI:59789"/>
        <dbReference type="ChEBI" id="CHEBI:73542"/>
        <dbReference type="ChEBI" id="CHEBI:74269"/>
        <dbReference type="EC" id="2.1.1.228"/>
    </reaction>
</comment>
<comment type="subunit">
    <text evidence="1">Homodimer.</text>
</comment>
<comment type="subcellular location">
    <subcellularLocation>
        <location evidence="1">Cytoplasm</location>
    </subcellularLocation>
</comment>
<comment type="similarity">
    <text evidence="1">Belongs to the RNA methyltransferase TrmD family.</text>
</comment>
<name>TRMD_FRATH</name>